<organism>
    <name type="scientific">Stenotrophomonas maltophilia (strain K279a)</name>
    <dbReference type="NCBI Taxonomy" id="522373"/>
    <lineage>
        <taxon>Bacteria</taxon>
        <taxon>Pseudomonadati</taxon>
        <taxon>Pseudomonadota</taxon>
        <taxon>Gammaproteobacteria</taxon>
        <taxon>Lysobacterales</taxon>
        <taxon>Lysobacteraceae</taxon>
        <taxon>Stenotrophomonas</taxon>
        <taxon>Stenotrophomonas maltophilia group</taxon>
    </lineage>
</organism>
<comment type="function">
    <text evidence="1">Catalyzes the base-exchange of a guanine (G) residue with the queuine precursor 7-aminomethyl-7-deazaguanine (PreQ1) at position 34 (anticodon wobble position) in tRNAs with GU(N) anticodons (tRNA-Asp, -Asn, -His and -Tyr). Catalysis occurs through a double-displacement mechanism. The nucleophile active site attacks the C1' of nucleotide 34 to detach the guanine base from the RNA, forming a covalent enzyme-RNA intermediate. The proton acceptor active site deprotonates the incoming PreQ1, allowing a nucleophilic attack on the C1' of the ribose to form the product. After dissociation, two additional enzymatic reactions on the tRNA convert PreQ1 to queuine (Q), resulting in the hypermodified nucleoside queuosine (7-(((4,5-cis-dihydroxy-2-cyclopenten-1-yl)amino)methyl)-7-deazaguanosine).</text>
</comment>
<comment type="catalytic activity">
    <reaction evidence="1">
        <text>7-aminomethyl-7-carbaguanine + guanosine(34) in tRNA = 7-aminomethyl-7-carbaguanosine(34) in tRNA + guanine</text>
        <dbReference type="Rhea" id="RHEA:24104"/>
        <dbReference type="Rhea" id="RHEA-COMP:10341"/>
        <dbReference type="Rhea" id="RHEA-COMP:10342"/>
        <dbReference type="ChEBI" id="CHEBI:16235"/>
        <dbReference type="ChEBI" id="CHEBI:58703"/>
        <dbReference type="ChEBI" id="CHEBI:74269"/>
        <dbReference type="ChEBI" id="CHEBI:82833"/>
        <dbReference type="EC" id="2.4.2.29"/>
    </reaction>
</comment>
<comment type="cofactor">
    <cofactor evidence="1">
        <name>Zn(2+)</name>
        <dbReference type="ChEBI" id="CHEBI:29105"/>
    </cofactor>
    <text evidence="1">Binds 1 zinc ion per subunit.</text>
</comment>
<comment type="pathway">
    <text evidence="1">tRNA modification; tRNA-queuosine biosynthesis.</text>
</comment>
<comment type="subunit">
    <text evidence="1">Homodimer. Within each dimer, one monomer is responsible for RNA recognition and catalysis, while the other monomer binds to the replacement base PreQ1.</text>
</comment>
<comment type="similarity">
    <text evidence="1">Belongs to the queuine tRNA-ribosyltransferase family.</text>
</comment>
<accession>B2FN00</accession>
<reference key="1">
    <citation type="journal article" date="2008" name="Genome Biol.">
        <title>The complete genome, comparative and functional analysis of Stenotrophomonas maltophilia reveals an organism heavily shielded by drug resistance determinants.</title>
        <authorList>
            <person name="Crossman L.C."/>
            <person name="Gould V.C."/>
            <person name="Dow J.M."/>
            <person name="Vernikos G.S."/>
            <person name="Okazaki A."/>
            <person name="Sebaihia M."/>
            <person name="Saunders D."/>
            <person name="Arrowsmith C."/>
            <person name="Carver T."/>
            <person name="Peters N."/>
            <person name="Adlem E."/>
            <person name="Kerhornou A."/>
            <person name="Lord A."/>
            <person name="Murphy L."/>
            <person name="Seeger K."/>
            <person name="Squares R."/>
            <person name="Rutter S."/>
            <person name="Quail M.A."/>
            <person name="Rajandream M.A."/>
            <person name="Harris D."/>
            <person name="Churcher C."/>
            <person name="Bentley S.D."/>
            <person name="Parkhill J."/>
            <person name="Thomson N.R."/>
            <person name="Avison M.B."/>
        </authorList>
    </citation>
    <scope>NUCLEOTIDE SEQUENCE [LARGE SCALE GENOMIC DNA]</scope>
    <source>
        <strain>K279a</strain>
    </source>
</reference>
<gene>
    <name evidence="1" type="primary">tgt</name>
    <name type="ordered locus">Smlt2009</name>
</gene>
<keyword id="KW-0328">Glycosyltransferase</keyword>
<keyword id="KW-0479">Metal-binding</keyword>
<keyword id="KW-0671">Queuosine biosynthesis</keyword>
<keyword id="KW-1185">Reference proteome</keyword>
<keyword id="KW-0808">Transferase</keyword>
<keyword id="KW-0819">tRNA processing</keyword>
<keyword id="KW-0862">Zinc</keyword>
<proteinExistence type="inferred from homology"/>
<protein>
    <recommendedName>
        <fullName evidence="1">Queuine tRNA-ribosyltransferase</fullName>
        <ecNumber evidence="1">2.4.2.29</ecNumber>
    </recommendedName>
    <alternativeName>
        <fullName evidence="1">Guanine insertion enzyme</fullName>
    </alternativeName>
    <alternativeName>
        <fullName evidence="1">tRNA-guanine transglycosylase</fullName>
    </alternativeName>
</protein>
<feature type="chain" id="PRO_1000097567" description="Queuine tRNA-ribosyltransferase">
    <location>
        <begin position="1"/>
        <end position="376"/>
    </location>
</feature>
<feature type="region of interest" description="RNA binding" evidence="1">
    <location>
        <begin position="248"/>
        <end position="254"/>
    </location>
</feature>
<feature type="region of interest" description="RNA binding; important for wobble base 34 recognition" evidence="1">
    <location>
        <begin position="272"/>
        <end position="276"/>
    </location>
</feature>
<feature type="active site" description="Proton acceptor" evidence="1">
    <location>
        <position position="92"/>
    </location>
</feature>
<feature type="active site" description="Nucleophile" evidence="1">
    <location>
        <position position="267"/>
    </location>
</feature>
<feature type="binding site" evidence="1">
    <location>
        <begin position="92"/>
        <end position="96"/>
    </location>
    <ligand>
        <name>substrate</name>
    </ligand>
</feature>
<feature type="binding site" evidence="1">
    <location>
        <position position="146"/>
    </location>
    <ligand>
        <name>substrate</name>
    </ligand>
</feature>
<feature type="binding site" evidence="1">
    <location>
        <position position="190"/>
    </location>
    <ligand>
        <name>substrate</name>
    </ligand>
</feature>
<feature type="binding site" evidence="1">
    <location>
        <position position="217"/>
    </location>
    <ligand>
        <name>substrate</name>
    </ligand>
</feature>
<feature type="binding site" evidence="1">
    <location>
        <position position="305"/>
    </location>
    <ligand>
        <name>Zn(2+)</name>
        <dbReference type="ChEBI" id="CHEBI:29105"/>
    </ligand>
</feature>
<feature type="binding site" evidence="1">
    <location>
        <position position="307"/>
    </location>
    <ligand>
        <name>Zn(2+)</name>
        <dbReference type="ChEBI" id="CHEBI:29105"/>
    </ligand>
</feature>
<feature type="binding site" evidence="1">
    <location>
        <position position="310"/>
    </location>
    <ligand>
        <name>Zn(2+)</name>
        <dbReference type="ChEBI" id="CHEBI:29105"/>
    </ligand>
</feature>
<feature type="binding site" evidence="1">
    <location>
        <position position="337"/>
    </location>
    <ligand>
        <name>Zn(2+)</name>
        <dbReference type="ChEBI" id="CHEBI:29105"/>
    </ligand>
</feature>
<evidence type="ECO:0000255" key="1">
    <source>
        <dbReference type="HAMAP-Rule" id="MF_00168"/>
    </source>
</evidence>
<name>TGT_STRMK</name>
<sequence length="376" mass="41535">MSRLQFQLQTRDGRARRGRLTFPRGTVETPAFMPVGTYGSVKGILPDDVRALGAEIILGNTFHLYLRPGLDIIADHGGLHGFCRWDGPILTDSGGFQVFSLAHRRKITEQGVTFASPTDGARVFLGPEESMKIQKVLDSDVVMIFDECTPYPATEDVARRSMELSLRWAQRSRNAHDELGNDAALFGIVQGGVHTDLRSRSAEALQAIGFDGYAVGGLAVGEPEHERNAMLDHLDPELPSDRPRYLMGVGRPEDLVEGVARGVDMFDCVMPTRNARNGHYFTSFGTVRIRNSQYARDMDPIEPGCGCVACTGGYTRSYLRHLDRCNEMLAPMLGTLHNLFYYEKLMADIRAAIEAGTFLAFRESFYAARGAVAPPL</sequence>
<dbReference type="EC" id="2.4.2.29" evidence="1"/>
<dbReference type="EMBL" id="AM743169">
    <property type="protein sequence ID" value="CAQ45521.1"/>
    <property type="molecule type" value="Genomic_DNA"/>
</dbReference>
<dbReference type="RefSeq" id="WP_012479928.1">
    <property type="nucleotide sequence ID" value="NC_010943.1"/>
</dbReference>
<dbReference type="SMR" id="B2FN00"/>
<dbReference type="EnsemblBacteria" id="CAQ45521">
    <property type="protein sequence ID" value="CAQ45521"/>
    <property type="gene ID" value="Smlt2009"/>
</dbReference>
<dbReference type="KEGG" id="sml:Smlt2009"/>
<dbReference type="PATRIC" id="fig|522373.3.peg.1916"/>
<dbReference type="eggNOG" id="COG0343">
    <property type="taxonomic scope" value="Bacteria"/>
</dbReference>
<dbReference type="HOGENOM" id="CLU_022060_0_1_6"/>
<dbReference type="UniPathway" id="UPA00392"/>
<dbReference type="Proteomes" id="UP000008840">
    <property type="component" value="Chromosome"/>
</dbReference>
<dbReference type="GO" id="GO:0005829">
    <property type="term" value="C:cytosol"/>
    <property type="evidence" value="ECO:0007669"/>
    <property type="project" value="TreeGrafter"/>
</dbReference>
<dbReference type="GO" id="GO:0046872">
    <property type="term" value="F:metal ion binding"/>
    <property type="evidence" value="ECO:0007669"/>
    <property type="project" value="UniProtKB-KW"/>
</dbReference>
<dbReference type="GO" id="GO:0008479">
    <property type="term" value="F:tRNA-guanosine(34) queuine transglycosylase activity"/>
    <property type="evidence" value="ECO:0007669"/>
    <property type="project" value="UniProtKB-UniRule"/>
</dbReference>
<dbReference type="GO" id="GO:0008616">
    <property type="term" value="P:queuosine biosynthetic process"/>
    <property type="evidence" value="ECO:0007669"/>
    <property type="project" value="UniProtKB-UniRule"/>
</dbReference>
<dbReference type="GO" id="GO:0002099">
    <property type="term" value="P:tRNA wobble guanine modification"/>
    <property type="evidence" value="ECO:0007669"/>
    <property type="project" value="TreeGrafter"/>
</dbReference>
<dbReference type="GO" id="GO:0101030">
    <property type="term" value="P:tRNA-guanine transglycosylation"/>
    <property type="evidence" value="ECO:0007669"/>
    <property type="project" value="InterPro"/>
</dbReference>
<dbReference type="FunFam" id="3.20.20.105:FF:000001">
    <property type="entry name" value="Queuine tRNA-ribosyltransferase"/>
    <property type="match status" value="1"/>
</dbReference>
<dbReference type="Gene3D" id="3.20.20.105">
    <property type="entry name" value="Queuine tRNA-ribosyltransferase-like"/>
    <property type="match status" value="1"/>
</dbReference>
<dbReference type="HAMAP" id="MF_00168">
    <property type="entry name" value="Q_tRNA_Tgt"/>
    <property type="match status" value="1"/>
</dbReference>
<dbReference type="InterPro" id="IPR050076">
    <property type="entry name" value="ArchSynthase1/Queuine_TRR"/>
</dbReference>
<dbReference type="InterPro" id="IPR004803">
    <property type="entry name" value="TGT"/>
</dbReference>
<dbReference type="InterPro" id="IPR036511">
    <property type="entry name" value="TGT-like_sf"/>
</dbReference>
<dbReference type="InterPro" id="IPR002616">
    <property type="entry name" value="tRNA_ribo_trans-like"/>
</dbReference>
<dbReference type="NCBIfam" id="TIGR00430">
    <property type="entry name" value="Q_tRNA_tgt"/>
    <property type="match status" value="1"/>
</dbReference>
<dbReference type="NCBIfam" id="TIGR00449">
    <property type="entry name" value="tgt_general"/>
    <property type="match status" value="1"/>
</dbReference>
<dbReference type="PANTHER" id="PTHR46499">
    <property type="entry name" value="QUEUINE TRNA-RIBOSYLTRANSFERASE"/>
    <property type="match status" value="1"/>
</dbReference>
<dbReference type="PANTHER" id="PTHR46499:SF1">
    <property type="entry name" value="QUEUINE TRNA-RIBOSYLTRANSFERASE"/>
    <property type="match status" value="1"/>
</dbReference>
<dbReference type="Pfam" id="PF01702">
    <property type="entry name" value="TGT"/>
    <property type="match status" value="1"/>
</dbReference>
<dbReference type="SUPFAM" id="SSF51713">
    <property type="entry name" value="tRNA-guanine transglycosylase"/>
    <property type="match status" value="1"/>
</dbReference>